<accession>Q326I0</accession>
<reference key="1">
    <citation type="journal article" date="2005" name="Nucleic Acids Res.">
        <title>Genome dynamics and diversity of Shigella species, the etiologic agents of bacillary dysentery.</title>
        <authorList>
            <person name="Yang F."/>
            <person name="Yang J."/>
            <person name="Zhang X."/>
            <person name="Chen L."/>
            <person name="Jiang Y."/>
            <person name="Yan Y."/>
            <person name="Tang X."/>
            <person name="Wang J."/>
            <person name="Xiong Z."/>
            <person name="Dong J."/>
            <person name="Xue Y."/>
            <person name="Zhu Y."/>
            <person name="Xu X."/>
            <person name="Sun L."/>
            <person name="Chen S."/>
            <person name="Nie H."/>
            <person name="Peng J."/>
            <person name="Xu J."/>
            <person name="Wang Y."/>
            <person name="Yuan Z."/>
            <person name="Wen Y."/>
            <person name="Yao Z."/>
            <person name="Shen Y."/>
            <person name="Qiang B."/>
            <person name="Hou Y."/>
            <person name="Yu J."/>
            <person name="Jin Q."/>
        </authorList>
    </citation>
    <scope>NUCLEOTIDE SEQUENCE [LARGE SCALE GENOMIC DNA]</scope>
    <source>
        <strain>Sb227</strain>
    </source>
</reference>
<keyword id="KW-0143">Chaperone</keyword>
<keyword id="KW-0413">Isomerase</keyword>
<keyword id="KW-0574">Periplasm</keyword>
<keyword id="KW-0677">Repeat</keyword>
<keyword id="KW-0697">Rotamase</keyword>
<keyword id="KW-0732">Signal</keyword>
<evidence type="ECO:0000255" key="1">
    <source>
        <dbReference type="HAMAP-Rule" id="MF_01183"/>
    </source>
</evidence>
<proteinExistence type="inferred from homology"/>
<name>SURA_SHIBS</name>
<gene>
    <name evidence="1" type="primary">surA</name>
    <name type="ordered locus">SBO_0042</name>
</gene>
<comment type="function">
    <text evidence="1">Chaperone involved in the correct folding and assembly of outer membrane proteins. Recognizes specific patterns of aromatic residues and the orientation of their side chains, which are found more frequently in integral outer membrane proteins. May act in both early periplasmic and late outer membrane-associated steps of protein maturation.</text>
</comment>
<comment type="catalytic activity">
    <reaction evidence="1">
        <text>[protein]-peptidylproline (omega=180) = [protein]-peptidylproline (omega=0)</text>
        <dbReference type="Rhea" id="RHEA:16237"/>
        <dbReference type="Rhea" id="RHEA-COMP:10747"/>
        <dbReference type="Rhea" id="RHEA-COMP:10748"/>
        <dbReference type="ChEBI" id="CHEBI:83833"/>
        <dbReference type="ChEBI" id="CHEBI:83834"/>
        <dbReference type="EC" id="5.2.1.8"/>
    </reaction>
</comment>
<comment type="subcellular location">
    <subcellularLocation>
        <location evidence="1">Periplasm</location>
    </subcellularLocation>
    <text evidence="1">Is capable of associating with the outer membrane.</text>
</comment>
<comment type="domain">
    <text evidence="1">The PPIase activity resides only in the second parvulin domain. The N-terminal region and the C-terminal tail are necessary and sufficient for the chaperone activity of SurA. The PPIase activity is dispensable for SurA to function as a chaperone. The N-terminal region and the C-terminal tail are also required for porin recognition.</text>
</comment>
<sequence length="428" mass="47284">MKNWKTLLLGIAMIANTSFAAPQVVDKVAAVVNNGVVLESDVDGLMQSVKLNAAQARQQLPDDATLRHQIMERLIMDQIILQMGQKMGVKISDEQLDQAIANIAKQNNMTLDQMRSRLAYDGLNYNTYRNQIRKEMIISEVRNNEVRRRITILPQEVESLAQQVGNQNDASTELNLSHILIPLPENPTSDQVNEAESQARAIVDQARNGADFGKLAIAHSADQQALNGGQMGWGRIQELPGIFAQALSTAKKGDIVGPIRSGVGFHILKVNDLRGESKNISVTEVHARHILLKPSPIMTDEQARVKLEQIAADIKSGKTTFAAAAKEFSQDPGSANQGGDLGWATPDIFDPAFRDALTRLNKGQMSAPVHSSFGWHLIELLDTRNVDKTDAAQKDRAYRMLMNRKFSEEAASWMQEQRASAYVKILSN</sequence>
<protein>
    <recommendedName>
        <fullName evidence="1">Chaperone SurA</fullName>
    </recommendedName>
    <alternativeName>
        <fullName evidence="1">Peptidyl-prolyl cis-trans isomerase SurA</fullName>
        <shortName evidence="1">PPIase SurA</shortName>
        <ecNumber evidence="1">5.2.1.8</ecNumber>
    </alternativeName>
    <alternativeName>
        <fullName evidence="1">Rotamase SurA</fullName>
    </alternativeName>
</protein>
<feature type="signal peptide" evidence="1">
    <location>
        <begin position="1"/>
        <end position="20"/>
    </location>
</feature>
<feature type="chain" id="PRO_0000270039" description="Chaperone SurA">
    <location>
        <begin position="21"/>
        <end position="428"/>
    </location>
</feature>
<feature type="domain" description="PpiC 1" evidence="1">
    <location>
        <begin position="171"/>
        <end position="272"/>
    </location>
</feature>
<feature type="domain" description="PpiC 2" evidence="1">
    <location>
        <begin position="282"/>
        <end position="382"/>
    </location>
</feature>
<dbReference type="EC" id="5.2.1.8" evidence="1"/>
<dbReference type="EMBL" id="CP000036">
    <property type="protein sequence ID" value="ABB64778.1"/>
    <property type="molecule type" value="Genomic_DNA"/>
</dbReference>
<dbReference type="RefSeq" id="WP_000800457.1">
    <property type="nucleotide sequence ID" value="NC_007613.1"/>
</dbReference>
<dbReference type="SMR" id="Q326I0"/>
<dbReference type="GeneID" id="93777382"/>
<dbReference type="KEGG" id="sbo:SBO_0042"/>
<dbReference type="HOGENOM" id="CLU_034646_11_0_6"/>
<dbReference type="Proteomes" id="UP000007067">
    <property type="component" value="Chromosome"/>
</dbReference>
<dbReference type="GO" id="GO:0030288">
    <property type="term" value="C:outer membrane-bounded periplasmic space"/>
    <property type="evidence" value="ECO:0007669"/>
    <property type="project" value="InterPro"/>
</dbReference>
<dbReference type="GO" id="GO:0042277">
    <property type="term" value="F:peptide binding"/>
    <property type="evidence" value="ECO:0007669"/>
    <property type="project" value="InterPro"/>
</dbReference>
<dbReference type="GO" id="GO:0003755">
    <property type="term" value="F:peptidyl-prolyl cis-trans isomerase activity"/>
    <property type="evidence" value="ECO:0007669"/>
    <property type="project" value="UniProtKB-UniRule"/>
</dbReference>
<dbReference type="GO" id="GO:0051082">
    <property type="term" value="F:unfolded protein binding"/>
    <property type="evidence" value="ECO:0007669"/>
    <property type="project" value="UniProtKB-UniRule"/>
</dbReference>
<dbReference type="GO" id="GO:0043165">
    <property type="term" value="P:Gram-negative-bacterium-type cell outer membrane assembly"/>
    <property type="evidence" value="ECO:0007669"/>
    <property type="project" value="InterPro"/>
</dbReference>
<dbReference type="GO" id="GO:0006457">
    <property type="term" value="P:protein folding"/>
    <property type="evidence" value="ECO:0007669"/>
    <property type="project" value="UniProtKB-UniRule"/>
</dbReference>
<dbReference type="GO" id="GO:0050821">
    <property type="term" value="P:protein stabilization"/>
    <property type="evidence" value="ECO:0007669"/>
    <property type="project" value="InterPro"/>
</dbReference>
<dbReference type="FunFam" id="1.10.4030.10:FF:000002">
    <property type="entry name" value="Chaperone SurA"/>
    <property type="match status" value="1"/>
</dbReference>
<dbReference type="FunFam" id="3.10.50.40:FF:000007">
    <property type="entry name" value="Chaperone SurA"/>
    <property type="match status" value="1"/>
</dbReference>
<dbReference type="Gene3D" id="3.10.50.40">
    <property type="match status" value="2"/>
</dbReference>
<dbReference type="Gene3D" id="1.10.4030.10">
    <property type="entry name" value="Porin chaperone SurA, peptide-binding domain"/>
    <property type="match status" value="2"/>
</dbReference>
<dbReference type="HAMAP" id="MF_01183">
    <property type="entry name" value="Chaperone_SurA"/>
    <property type="match status" value="1"/>
</dbReference>
<dbReference type="InterPro" id="IPR050280">
    <property type="entry name" value="OMP_Chaperone_SurA"/>
</dbReference>
<dbReference type="InterPro" id="IPR046357">
    <property type="entry name" value="PPIase_dom_sf"/>
</dbReference>
<dbReference type="InterPro" id="IPR000297">
    <property type="entry name" value="PPIase_PpiC"/>
</dbReference>
<dbReference type="InterPro" id="IPR023058">
    <property type="entry name" value="PPIase_PpiC_CS"/>
</dbReference>
<dbReference type="InterPro" id="IPR023034">
    <property type="entry name" value="PPIase_SurA"/>
</dbReference>
<dbReference type="InterPro" id="IPR015391">
    <property type="entry name" value="SurA_N"/>
</dbReference>
<dbReference type="InterPro" id="IPR027304">
    <property type="entry name" value="Trigger_fact/SurA_dom_sf"/>
</dbReference>
<dbReference type="NCBIfam" id="NF008038">
    <property type="entry name" value="PRK10770.1"/>
    <property type="match status" value="1"/>
</dbReference>
<dbReference type="PANTHER" id="PTHR47637">
    <property type="entry name" value="CHAPERONE SURA"/>
    <property type="match status" value="1"/>
</dbReference>
<dbReference type="PANTHER" id="PTHR47637:SF1">
    <property type="entry name" value="CHAPERONE SURA"/>
    <property type="match status" value="1"/>
</dbReference>
<dbReference type="Pfam" id="PF00639">
    <property type="entry name" value="Rotamase"/>
    <property type="match status" value="1"/>
</dbReference>
<dbReference type="Pfam" id="PF13616">
    <property type="entry name" value="Rotamase_3"/>
    <property type="match status" value="1"/>
</dbReference>
<dbReference type="Pfam" id="PF09312">
    <property type="entry name" value="SurA_N"/>
    <property type="match status" value="1"/>
</dbReference>
<dbReference type="SUPFAM" id="SSF54534">
    <property type="entry name" value="FKBP-like"/>
    <property type="match status" value="2"/>
</dbReference>
<dbReference type="SUPFAM" id="SSF109998">
    <property type="entry name" value="Triger factor/SurA peptide-binding domain-like"/>
    <property type="match status" value="1"/>
</dbReference>
<dbReference type="PROSITE" id="PS01096">
    <property type="entry name" value="PPIC_PPIASE_1"/>
    <property type="match status" value="2"/>
</dbReference>
<dbReference type="PROSITE" id="PS50198">
    <property type="entry name" value="PPIC_PPIASE_2"/>
    <property type="match status" value="2"/>
</dbReference>
<organism>
    <name type="scientific">Shigella boydii serotype 4 (strain Sb227)</name>
    <dbReference type="NCBI Taxonomy" id="300268"/>
    <lineage>
        <taxon>Bacteria</taxon>
        <taxon>Pseudomonadati</taxon>
        <taxon>Pseudomonadota</taxon>
        <taxon>Gammaproteobacteria</taxon>
        <taxon>Enterobacterales</taxon>
        <taxon>Enterobacteriaceae</taxon>
        <taxon>Shigella</taxon>
    </lineage>
</organism>